<gene>
    <name evidence="1" type="primary">mgrB</name>
    <name type="ordered locus">SBO_1239</name>
</gene>
<reference key="1">
    <citation type="journal article" date="2005" name="Nucleic Acids Res.">
        <title>Genome dynamics and diversity of Shigella species, the etiologic agents of bacillary dysentery.</title>
        <authorList>
            <person name="Yang F."/>
            <person name="Yang J."/>
            <person name="Zhang X."/>
            <person name="Chen L."/>
            <person name="Jiang Y."/>
            <person name="Yan Y."/>
            <person name="Tang X."/>
            <person name="Wang J."/>
            <person name="Xiong Z."/>
            <person name="Dong J."/>
            <person name="Xue Y."/>
            <person name="Zhu Y."/>
            <person name="Xu X."/>
            <person name="Sun L."/>
            <person name="Chen S."/>
            <person name="Nie H."/>
            <person name="Peng J."/>
            <person name="Xu J."/>
            <person name="Wang Y."/>
            <person name="Yuan Z."/>
            <person name="Wen Y."/>
            <person name="Yao Z."/>
            <person name="Shen Y."/>
            <person name="Qiang B."/>
            <person name="Hou Y."/>
            <person name="Yu J."/>
            <person name="Jin Q."/>
        </authorList>
    </citation>
    <scope>NUCLEOTIDE SEQUENCE [LARGE SCALE GENOMIC DNA]</scope>
    <source>
        <strain>Sb227</strain>
    </source>
</reference>
<sequence length="47" mass="5552">MKKFRWVVLVVVVLACLLLWAQVFNMMCDQDVQFFSGICAINQFIPW</sequence>
<comment type="function">
    <text evidence="1">PhoP-regulated transcription is redox-sensitive, being activated when the periplasm becomes more reducing. MgrB acts between DsbA/DsbB and PhoP/PhoQ in this pathway. Represses PhoP/PhoQ signaling, possibly by binding to the periplasmic domain of PhoQ, altering its activity and that of downstream effector PhoP.</text>
</comment>
<comment type="subunit">
    <text evidence="1">May form homooligomers. Probably interacts with the periplasmic domain of PhoQ.</text>
</comment>
<comment type="subcellular location">
    <subcellularLocation>
        <location evidence="1">Cell inner membrane</location>
        <topology evidence="1">Single-pass membrane protein</topology>
    </subcellularLocation>
</comment>
<comment type="similarity">
    <text evidence="1">Belongs to the MgrB family.</text>
</comment>
<protein>
    <recommendedName>
        <fullName evidence="1">PhoP/PhoQ regulator MgrB</fullName>
    </recommendedName>
</protein>
<keyword id="KW-0997">Cell inner membrane</keyword>
<keyword id="KW-1003">Cell membrane</keyword>
<keyword id="KW-0472">Membrane</keyword>
<keyword id="KW-0812">Transmembrane</keyword>
<keyword id="KW-1133">Transmembrane helix</keyword>
<evidence type="ECO:0000255" key="1">
    <source>
        <dbReference type="HAMAP-Rule" id="MF_01596"/>
    </source>
</evidence>
<name>MGRB_SHIBS</name>
<feature type="chain" id="PRO_0000330681" description="PhoP/PhoQ regulator MgrB">
    <location>
        <begin position="1"/>
        <end position="47"/>
    </location>
</feature>
<feature type="transmembrane region" description="Helical" evidence="1">
    <location>
        <begin position="6"/>
        <end position="26"/>
    </location>
</feature>
<accession>Q321Z1</accession>
<organism>
    <name type="scientific">Shigella boydii serotype 4 (strain Sb227)</name>
    <dbReference type="NCBI Taxonomy" id="300268"/>
    <lineage>
        <taxon>Bacteria</taxon>
        <taxon>Pseudomonadati</taxon>
        <taxon>Pseudomonadota</taxon>
        <taxon>Gammaproteobacteria</taxon>
        <taxon>Enterobacterales</taxon>
        <taxon>Enterobacteriaceae</taxon>
        <taxon>Shigella</taxon>
    </lineage>
</organism>
<proteinExistence type="inferred from homology"/>
<dbReference type="EMBL" id="CP000036">
    <property type="protein sequence ID" value="ABB65867.1"/>
    <property type="molecule type" value="Genomic_DNA"/>
</dbReference>
<dbReference type="RefSeq" id="WP_000714550.1">
    <property type="nucleotide sequence ID" value="NC_007613.1"/>
</dbReference>
<dbReference type="SMR" id="Q321Z1"/>
<dbReference type="GeneID" id="93776075"/>
<dbReference type="KEGG" id="sbo:SBO_1239"/>
<dbReference type="HOGENOM" id="CLU_208030_1_0_6"/>
<dbReference type="Proteomes" id="UP000007067">
    <property type="component" value="Chromosome"/>
</dbReference>
<dbReference type="GO" id="GO:0005886">
    <property type="term" value="C:plasma membrane"/>
    <property type="evidence" value="ECO:0007669"/>
    <property type="project" value="UniProtKB-SubCell"/>
</dbReference>
<dbReference type="GO" id="GO:0070298">
    <property type="term" value="P:negative regulation of phosphorelay signal transduction system"/>
    <property type="evidence" value="ECO:0007669"/>
    <property type="project" value="UniProtKB-UniRule"/>
</dbReference>
<dbReference type="HAMAP" id="MF_01596">
    <property type="entry name" value="MgrB"/>
    <property type="match status" value="1"/>
</dbReference>
<dbReference type="InterPro" id="IPR020907">
    <property type="entry name" value="MgrB"/>
</dbReference>
<dbReference type="NCBIfam" id="NF007635">
    <property type="entry name" value="PRK10299.1"/>
    <property type="match status" value="1"/>
</dbReference>
<dbReference type="Pfam" id="PF13998">
    <property type="entry name" value="MgrB"/>
    <property type="match status" value="1"/>
</dbReference>
<dbReference type="PROSITE" id="PS51257">
    <property type="entry name" value="PROKAR_LIPOPROTEIN"/>
    <property type="match status" value="1"/>
</dbReference>